<proteinExistence type="evidence at protein level"/>
<accession>O75044</accession>
<accession>A2RUF3</accession>
<name>SRGP2_HUMAN</name>
<comment type="function">
    <text evidence="2 10 11 14 16 17">Postsynaptic RAC1 GTPase activating protein (GAP) that plays a key role in neuronal morphogenesis and migration mainly during development of the cerebral cortex (PubMed:20810653, PubMed:27373832, PubMed:28333212). Regulates excitatory and inhibitory synapse maturation and density in cortical pyramidal neurons (PubMed:22559944, PubMed:27373832). SRGAP2/SRGAP2A limits excitatory and inhibitory synapse density through its RAC1-specific GTPase activating activity, while it promotes maturation of both excitatory and inhibitory synapses through its ability to bind to the postsynaptic scaffolding protein HOMER1 at excitatory synapses, and the postsynaptic protein GPHN at inhibitory synapses (By similarity). Mechanistically, acts by binding and deforming membranes, thereby regulating actin dynamics to regulate cell migration and differentiation (PubMed:27373832). Promotes cell repulsion and contact inhibition of locomotion: localizes to protrusions with curved edges and controls the duration of RAC1 activity in contact protrusions (By similarity). In non-neuronal cells, may also play a role in cell migration by regulating the formation of lamellipodia and filopodia (PubMed:20810653, PubMed:21148482).</text>
</comment>
<comment type="activity regulation">
    <text evidence="14 16 17">Activity is strongly inhibited by SRGAP2C, which heterodimerize with SRGAP2/SRGAP2A, thereby reducing SRGAP2/SRGAP2A levels through proteasome-dependent degradation.</text>
</comment>
<comment type="subunit">
    <text evidence="2 8 9 10 11 13 14 15 16 17">Homodimer (PubMed:20810653, PubMed:26365803, PubMed:28333212). Heterodimer; forms a heterodimer with SRGAP2C, altering SRGAP2 function (PubMed:22559944, PubMed:27373832, PubMed:28333212). Forms a heterooligomer with SRGAP1 and SRGAP3 through its F-BAR domain (PubMed:22467852). Interacts (via SH3 domain) with GPHN (By similarity). Interacts (via SH3 domain) with FMNL1 (activated by RAC1); regulates the actin filament severing activity of FMNL1 and actin dynamics (PubMed:21148482). Interacts (via SH3 domain) with FMNL3 (PubMed:21148482). Interacts with RAC1; specifically stimulates RAC1 GTPase activity (PubMed:21148482). Interacts (via F-BAR domain) with HOMER1 (By similarity). Interacts with ROBO1 and ROBO2 (PubMed:11672528, PubMed:21148482, PubMed:26365803). Interacts with FASLG (PubMed:19807924). Interacts with PRMT5 (PubMed:20810653).</text>
</comment>
<comment type="interaction">
    <interactant intactId="EBI-1051034">
        <id>O75044</id>
    </interactant>
    <interactant intactId="EBI-495538">
        <id>P48023</id>
        <label>FASLG</label>
    </interactant>
    <organismsDiffer>false</organismsDiffer>
    <experiments>2</experiments>
</comment>
<comment type="interaction">
    <interactant intactId="EBI-1051034">
        <id>O75044</id>
    </interactant>
    <interactant intactId="EBI-720020">
        <id>O95466</id>
        <label>FMNL1</label>
    </interactant>
    <organismsDiffer>false</organismsDiffer>
    <experiments>3</experiments>
</comment>
<comment type="interaction">
    <interactant intactId="EBI-1051034">
        <id>O75044</id>
    </interactant>
    <interactant intactId="EBI-466029">
        <id>P42858</id>
        <label>HTT</label>
    </interactant>
    <organismsDiffer>false</organismsDiffer>
    <experiments>3</experiments>
</comment>
<comment type="interaction">
    <interactant intactId="EBI-1051034">
        <id>O75044</id>
    </interactant>
    <interactant intactId="EBI-351098">
        <id>O14744</id>
        <label>PRMT5</label>
    </interactant>
    <organismsDiffer>false</organismsDiffer>
    <experiments>4</experiments>
</comment>
<comment type="interaction">
    <interactant intactId="EBI-1051034">
        <id>O75044</id>
    </interactant>
    <interactant intactId="EBI-399762">
        <id>Q9Y6N7</id>
        <label>ROBO1</label>
    </interactant>
    <organismsDiffer>false</organismsDiffer>
    <experiments>3</experiments>
</comment>
<comment type="interaction">
    <interactant intactId="EBI-1051034">
        <id>O75044</id>
    </interactant>
    <interactant intactId="EBI-1051034">
        <id>O75044</id>
        <label>SRGAP2</label>
    </interactant>
    <organismsDiffer>false</organismsDiffer>
    <experiments>5</experiments>
</comment>
<comment type="interaction">
    <interactant intactId="EBI-1051034">
        <id>O75044</id>
    </interactant>
    <interactant intactId="EBI-347088">
        <id>P63104</id>
        <label>YWHAZ</label>
    </interactant>
    <organismsDiffer>false</organismsDiffer>
    <experiments>6</experiments>
</comment>
<comment type="interaction">
    <interactant intactId="EBI-1051034">
        <id>O75044</id>
    </interactant>
    <interactant intactId="EBI-774731">
        <id>Q6ZPF4</id>
        <label>Fmnl3</label>
    </interactant>
    <organismsDiffer>true</organismsDiffer>
    <experiments>3</experiments>
</comment>
<comment type="subcellular location">
    <subcellularLocation>
        <location evidence="11">Cell membrane</location>
    </subcellularLocation>
    <subcellularLocation>
        <location evidence="19">Cell projection</location>
        <location evidence="19">Dendritic spine</location>
    </subcellularLocation>
    <subcellularLocation>
        <location evidence="2">Postsynaptic density</location>
    </subcellularLocation>
    <subcellularLocation>
        <location evidence="2">Postsynaptic cell membrane</location>
    </subcellularLocation>
    <subcellularLocation>
        <location evidence="10">Cell projection</location>
        <location evidence="10">Lamellipodium</location>
    </subcellularLocation>
    <subcellularLocation>
        <location evidence="2">Cytoplasmic vesicle</location>
        <location evidence="2">Phagosome</location>
    </subcellularLocation>
    <subcellularLocation>
        <location evidence="1">Nucleus</location>
    </subcellularLocation>
    <subcellularLocation>
        <location evidence="2">Cytoplasm</location>
        <location evidence="2">Cytosol</location>
    </subcellularLocation>
    <text evidence="1 2">Recruited to actin-rich phagosomes during phagocytosis (By similarity). Translocates from nucleus to cytoplasm during development (By similarity).</text>
</comment>
<comment type="domain">
    <text evidence="13">The F-BAR domain mediates oligomerization, binds membranes, and induces plasma membrane protrusions.</text>
</comment>
<comment type="PTM">
    <text evidence="10">Methylation at Arg-927 is required for the stimulation of cell migration, dimerization and localization at the plasma membrane protrusions.</text>
</comment>
<comment type="disease">
    <text evidence="12">A chromosomal aberration disrupting SRGAP2 has been found in a patient with early infantile epileptic encephalopathy. Balanced translocation t(1;9)(q32;q13) (PubMed:22106086).</text>
</comment>
<comment type="miscellaneous">
    <text>There are 3 duplications of SRGAP2 in the human genome as a result of segmental gene duplications. SRGAP2C is the only one to be fixed at a diploid state in the human genome. Moreover, SRGAP2C is functional, interacts with and inhibits SRGAP2 and is human-specific. The appearance of SRGAP2C in the human genome is estimated to 2,4 million years ago, which corresponds to the beginning of neocortex expansion in human evolution and it may have played an important role in this process through its interaction with SRGAP2 function.</text>
</comment>
<comment type="sequence caution" evidence="21">
    <conflict type="erroneous initiation">
        <sequence resource="EMBL-CDS" id="BAA32301"/>
    </conflict>
    <text>Extended N-terminus.</text>
</comment>
<comment type="online information" name="Protein Spotlight">
    <link uri="https://www.proteinspotlight.org/back_issues/143"/>
    <text>Branching out - Issue 143 of October 2012</text>
</comment>
<gene>
    <name evidence="18 22" type="primary">SRGAP2</name>
    <name type="synonym">ARHGAP34</name>
    <name type="synonym">FNBP2</name>
    <name evidence="20" type="synonym">KIAA0456</name>
    <name type="synonym">SRGAP2A</name>
</gene>
<sequence length="1071" mass="120871">MTSPAKFKKDKEIIAEYDTQVKEIRAQLTEQMKCLDQQCELRVQLLQDLQDFFRKKAEIEMDYSRNLEKLAERFLAKTRSTKDQQFKKDQNVLSPVNCWNLLLNQVKRESRDHTTLSDIYLNNIIPRFVQVSEDSGRLFKKSKEVGQQLQDDLMKVLNELYSVMKTYHMYNADSISAQSKLKEAEKQEEKQIGKSVKQEDRQTPRSPDSTANVRIEEKHVRRSSVKKIEKMKEKRQAKYTENKLKAIKARNEYLLALEATNASVFKYYIHDLSDLIDQCCDLGYHASLNRALRTFLSAELNLEQSKHEGLDAIENAVENLDATSDKQRLMEMYNNVFCPPMKFEFQPHMGDMASQLCAQQPVQSELVQRCQQLQSRLSTLKIENEEVKKTMEATLQTIQDIVTVEDFDVSDCFQYSNSMESVKSTVSETFMSKPSIAKRRANQQETEQFYFTKMKEYLEGRNLITKLQAKHDLLQKTLGESQRTDCSLARRSSTVRKQDSSQAIPLVVESCIRFISRHGLQHEGIFRVSGSQVEVNDIKNAFERGEDPLAGDQNDHDMDSIAGVLKLYFRGLEHPLFPKDIFHDLMACVTMDNLQERALHIRKVLLVLPKTTLIIMRYLFAFLNHLSQFSEENMMDPYNLAICFGPSLMSVPEGHDQVSCQAHVNELIKTIIIQHENIFPSPRELEGPVYSRGGSMEDYCDSPHGETTSVEDSTQDVTAEHHTSDDECEPIEAIAKFDYVGRTARELSFKKGASLLLYQRASDDWWEGRHNGIDGLIPHQYIVVQDTEDGVVERSSPKSEIEVISEPPEEKVTARAGASCPSGGHVADIYLANINKQRKRPESGSIRKTFRSDSHGLSSSLTDSSSPGVGASCRPSSQPIMSQSLPKEGPDKCSISGHGSLNSISRHSSLKNRLDSPQIRKTATAGRSKSFNNHRPMDPEVIAQDIEATMNSALNELRELERQSSVKHTPDVVLDTLEPLKTSPVVAPTSEPSSPLHTQLLKDPEPAFQRSASTAGDIACAFRPVKSVKMAAPVKPPATRPKPTVFPKTNATSPGVNSSTSPQSTDKSCTV</sequence>
<feature type="chain" id="PRO_0000056767" description="SLIT-ROBO Rho GTPase-activating protein 2">
    <location>
        <begin position="1"/>
        <end position="1071"/>
    </location>
</feature>
<feature type="domain" description="F-BAR" evidence="6">
    <location>
        <begin position="22"/>
        <end position="325"/>
    </location>
</feature>
<feature type="domain" description="Rho-GAP" evidence="4">
    <location>
        <begin position="489"/>
        <end position="679"/>
    </location>
</feature>
<feature type="domain" description="SH3" evidence="5">
    <location>
        <begin position="728"/>
        <end position="787"/>
    </location>
</feature>
<feature type="region of interest" description="Disordered" evidence="7">
    <location>
        <begin position="181"/>
        <end position="211"/>
    </location>
</feature>
<feature type="region of interest" description="Disordered" evidence="7">
    <location>
        <begin position="698"/>
        <end position="726"/>
    </location>
</feature>
<feature type="region of interest" description="Disordered" evidence="7">
    <location>
        <begin position="837"/>
        <end position="936"/>
    </location>
</feature>
<feature type="region of interest" description="Disordered" evidence="7">
    <location>
        <begin position="983"/>
        <end position="1012"/>
    </location>
</feature>
<feature type="region of interest" description="Disordered" evidence="7">
    <location>
        <begin position="1029"/>
        <end position="1071"/>
    </location>
</feature>
<feature type="coiled-coil region" evidence="3">
    <location>
        <begin position="362"/>
        <end position="401"/>
    </location>
</feature>
<feature type="coiled-coil region" evidence="3">
    <location>
        <begin position="940"/>
        <end position="967"/>
    </location>
</feature>
<feature type="compositionally biased region" description="Basic and acidic residues" evidence="7">
    <location>
        <begin position="181"/>
        <end position="203"/>
    </location>
</feature>
<feature type="compositionally biased region" description="Polar residues" evidence="7">
    <location>
        <begin position="705"/>
        <end position="717"/>
    </location>
</feature>
<feature type="compositionally biased region" description="Low complexity" evidence="7">
    <location>
        <begin position="855"/>
        <end position="866"/>
    </location>
</feature>
<feature type="compositionally biased region" description="Polar residues" evidence="7">
    <location>
        <begin position="874"/>
        <end position="885"/>
    </location>
</feature>
<feature type="compositionally biased region" description="Polar residues" evidence="7">
    <location>
        <begin position="897"/>
        <end position="907"/>
    </location>
</feature>
<feature type="compositionally biased region" description="Polar residues" evidence="7">
    <location>
        <begin position="919"/>
        <end position="933"/>
    </location>
</feature>
<feature type="compositionally biased region" description="Polar residues" evidence="7">
    <location>
        <begin position="1047"/>
        <end position="1071"/>
    </location>
</feature>
<feature type="site" description="Arginine finger; crucial for GTP hydrolysis by stabilizing the transition state" evidence="4">
    <location>
        <position position="527"/>
    </location>
</feature>
<feature type="modified residue" description="Phosphoserine" evidence="1">
    <location>
        <position position="206"/>
    </location>
</feature>
<feature type="modified residue" description="Phosphoserine" evidence="1">
    <location>
        <position position="427"/>
    </location>
</feature>
<feature type="modified residue" description="Phosphoserine" evidence="2">
    <location>
        <position position="500"/>
    </location>
</feature>
<feature type="modified residue" description="Phosphoserine" evidence="1">
    <location>
        <position position="691"/>
    </location>
</feature>
<feature type="modified residue" description="Phosphoserine" evidence="2">
    <location>
        <position position="695"/>
    </location>
</feature>
<feature type="modified residue" description="Phosphoserine" evidence="28">
    <location>
        <position position="724"/>
    </location>
</feature>
<feature type="modified residue" description="Phosphoserine" evidence="27">
    <location>
        <position position="795"/>
    </location>
</feature>
<feature type="modified residue" description="Phosphoserine" evidence="27">
    <location>
        <position position="916"/>
    </location>
</feature>
<feature type="modified residue" description="Symmetric dimethylarginine; by PRMT5" evidence="10">
    <location>
        <position position="927"/>
    </location>
</feature>
<feature type="modified residue" description="Phosphoserine" evidence="26">
    <location>
        <position position="930"/>
    </location>
</feature>
<feature type="modified residue" description="Phosphoserine" evidence="2">
    <location>
        <position position="990"/>
    </location>
</feature>
<feature type="modified residue" description="Phosphoserine" evidence="27">
    <location>
        <position position="994"/>
    </location>
</feature>
<feature type="modified residue" description="Phosphoserine" evidence="27">
    <location>
        <position position="1013"/>
    </location>
</feature>
<feature type="modified residue" description="Phosphoserine" evidence="27">
    <location>
        <position position="1027"/>
    </location>
</feature>
<feature type="sequence variant" id="VAR_055834" description="In dbSNP:rs17018890.">
    <original>R</original>
    <variation>G</variation>
    <location>
        <position position="874"/>
    </location>
</feature>
<feature type="mutagenesis site" description="In F-BARx-R5E mutant; abolished binding to membranes; when associated with 234--E--E-238." evidence="17">
    <original>RK</original>
    <variation>EE</variation>
    <location>
        <begin position="54"/>
        <end position="55"/>
    </location>
</feature>
<feature type="mutagenesis site" description="Does not affect protein stability." evidence="17">
    <original>R</original>
    <variation>K</variation>
    <variation>L</variation>
    <variation>S</variation>
    <location>
        <position position="108"/>
    </location>
</feature>
<feature type="mutagenesis site" description="Decreased protein stability." evidence="17">
    <original>R</original>
    <variation>W</variation>
    <location>
        <position position="108"/>
    </location>
</feature>
<feature type="mutagenesis site" description="In F-BARx-R5E mutant; abolished binding to membranes; when associated with 54-E-E-55." evidence="17">
    <original>KRQAK</original>
    <variation>EEQAE</variation>
    <location>
        <begin position="234"/>
        <end position="238"/>
    </location>
</feature>
<feature type="mutagenesis site" description="Abolished RAC1 GTPase activity; when associated with A-566." evidence="16">
    <original>R</original>
    <variation>L</variation>
    <location>
        <position position="527"/>
    </location>
</feature>
<feature type="mutagenesis site" description="Abolished RAC1 GTPase activity; when associated with L-527." evidence="16">
    <original>K</original>
    <variation>A</variation>
    <location>
        <position position="566"/>
    </location>
</feature>
<feature type="mutagenesis site" description="Abolished interaction with ROBO1." evidence="15">
    <original>W</original>
    <variation>A</variation>
    <location>
        <position position="765"/>
    </location>
</feature>
<feature type="mutagenesis site" description="Abolished interaction with ROBO1." evidence="15">
    <original>Y</original>
    <variation>A</variation>
    <location>
        <position position="781"/>
    </location>
</feature>
<feature type="mutagenesis site" description="Increased interaction with ROBO1." evidence="15">
    <original>P</original>
    <variation>Q</variation>
    <location>
        <position position="807"/>
    </location>
</feature>
<feature type="mutagenesis site" description="Loss of the ability to stimulate cell migration, to localize at the plasma membrane protrusions and to dimerize." evidence="10">
    <original>R</original>
    <variation>A</variation>
    <location>
        <position position="927"/>
    </location>
</feature>
<feature type="sequence conflict" description="In Ref. 2; BAA32301." ref="2">
    <original>S</original>
    <variation>P</variation>
    <location>
        <position position="709"/>
    </location>
</feature>
<feature type="helix" evidence="32">
    <location>
        <begin position="10"/>
        <end position="76"/>
    </location>
</feature>
<feature type="helix" evidence="32">
    <location>
        <begin position="94"/>
        <end position="122"/>
    </location>
</feature>
<feature type="helix" evidence="32">
    <location>
        <begin position="124"/>
        <end position="186"/>
    </location>
</feature>
<feature type="helix" evidence="32">
    <location>
        <begin position="188"/>
        <end position="191"/>
    </location>
</feature>
<feature type="helix" evidence="32">
    <location>
        <begin position="223"/>
        <end position="269"/>
    </location>
</feature>
<feature type="helix" evidence="32">
    <location>
        <begin position="271"/>
        <end position="278"/>
    </location>
</feature>
<feature type="turn" evidence="32">
    <location>
        <begin position="279"/>
        <end position="281"/>
    </location>
</feature>
<feature type="helix" evidence="32">
    <location>
        <begin position="284"/>
        <end position="318"/>
    </location>
</feature>
<feature type="helix" evidence="32">
    <location>
        <begin position="322"/>
        <end position="332"/>
    </location>
</feature>
<feature type="helix" evidence="32">
    <location>
        <begin position="334"/>
        <end position="337"/>
    </location>
</feature>
<feature type="strand" evidence="31">
    <location>
        <begin position="348"/>
        <end position="350"/>
    </location>
</feature>
<feature type="helix" evidence="32">
    <location>
        <begin position="362"/>
        <end position="402"/>
    </location>
</feature>
<feature type="helix" evidence="32">
    <location>
        <begin position="410"/>
        <end position="413"/>
    </location>
</feature>
<feature type="helix" evidence="32">
    <location>
        <begin position="436"/>
        <end position="478"/>
    </location>
</feature>
<feature type="strand" evidence="30">
    <location>
        <begin position="731"/>
        <end position="737"/>
    </location>
</feature>
<feature type="strand" evidence="29">
    <location>
        <begin position="742"/>
        <end position="746"/>
    </location>
</feature>
<feature type="strand" evidence="30">
    <location>
        <begin position="754"/>
        <end position="762"/>
    </location>
</feature>
<feature type="strand" evidence="30">
    <location>
        <begin position="765"/>
        <end position="770"/>
    </location>
</feature>
<feature type="strand" evidence="30">
    <location>
        <begin position="773"/>
        <end position="778"/>
    </location>
</feature>
<feature type="helix" evidence="30">
    <location>
        <begin position="779"/>
        <end position="781"/>
    </location>
</feature>
<feature type="strand" evidence="30">
    <location>
        <begin position="782"/>
        <end position="784"/>
    </location>
</feature>
<feature type="helix" evidence="30">
    <location>
        <begin position="791"/>
        <end position="795"/>
    </location>
</feature>
<feature type="helix" evidence="30">
    <location>
        <begin position="800"/>
        <end position="804"/>
    </location>
</feature>
<protein>
    <recommendedName>
        <fullName evidence="18">SLIT-ROBO Rho GTPase-activating protein 2</fullName>
        <shortName evidence="18">srGAP2</shortName>
    </recommendedName>
    <alternativeName>
        <fullName>Formin-binding protein 2</fullName>
    </alternativeName>
    <alternativeName>
        <fullName>Rho GTPase-activating protein 34</fullName>
    </alternativeName>
</protein>
<reference key="1">
    <citation type="journal article" date="1997" name="DNA Res.">
        <title>Characterization of cDNA clones in size-fractionated cDNA libraries from human brain.</title>
        <authorList>
            <person name="Seki N."/>
            <person name="Ohira M."/>
            <person name="Nagase T."/>
            <person name="Ishikawa K."/>
            <person name="Miyajima N."/>
            <person name="Nakajima D."/>
            <person name="Nomura N."/>
            <person name="Ohara O."/>
        </authorList>
    </citation>
    <scope>NUCLEOTIDE SEQUENCE [LARGE SCALE MRNA]</scope>
    <source>
        <tissue>Brain</tissue>
    </source>
</reference>
<reference key="2">
    <citation type="journal article" date="2006" name="Nature">
        <title>The DNA sequence and biological annotation of human chromosome 1.</title>
        <authorList>
            <person name="Gregory S.G."/>
            <person name="Barlow K.F."/>
            <person name="McLay K.E."/>
            <person name="Kaul R."/>
            <person name="Swarbreck D."/>
            <person name="Dunham A."/>
            <person name="Scott C.E."/>
            <person name="Howe K.L."/>
            <person name="Woodfine K."/>
            <person name="Spencer C.C.A."/>
            <person name="Jones M.C."/>
            <person name="Gillson C."/>
            <person name="Searle S."/>
            <person name="Zhou Y."/>
            <person name="Kokocinski F."/>
            <person name="McDonald L."/>
            <person name="Evans R."/>
            <person name="Phillips K."/>
            <person name="Atkinson A."/>
            <person name="Cooper R."/>
            <person name="Jones C."/>
            <person name="Hall R.E."/>
            <person name="Andrews T.D."/>
            <person name="Lloyd C."/>
            <person name="Ainscough R."/>
            <person name="Almeida J.P."/>
            <person name="Ambrose K.D."/>
            <person name="Anderson F."/>
            <person name="Andrew R.W."/>
            <person name="Ashwell R.I.S."/>
            <person name="Aubin K."/>
            <person name="Babbage A.K."/>
            <person name="Bagguley C.L."/>
            <person name="Bailey J."/>
            <person name="Beasley H."/>
            <person name="Bethel G."/>
            <person name="Bird C.P."/>
            <person name="Bray-Allen S."/>
            <person name="Brown J.Y."/>
            <person name="Brown A.J."/>
            <person name="Buckley D."/>
            <person name="Burton J."/>
            <person name="Bye J."/>
            <person name="Carder C."/>
            <person name="Chapman J.C."/>
            <person name="Clark S.Y."/>
            <person name="Clarke G."/>
            <person name="Clee C."/>
            <person name="Cobley V."/>
            <person name="Collier R.E."/>
            <person name="Corby N."/>
            <person name="Coville G.J."/>
            <person name="Davies J."/>
            <person name="Deadman R."/>
            <person name="Dunn M."/>
            <person name="Earthrowl M."/>
            <person name="Ellington A.G."/>
            <person name="Errington H."/>
            <person name="Frankish A."/>
            <person name="Frankland J."/>
            <person name="French L."/>
            <person name="Garner P."/>
            <person name="Garnett J."/>
            <person name="Gay L."/>
            <person name="Ghori M.R.J."/>
            <person name="Gibson R."/>
            <person name="Gilby L.M."/>
            <person name="Gillett W."/>
            <person name="Glithero R.J."/>
            <person name="Grafham D.V."/>
            <person name="Griffiths C."/>
            <person name="Griffiths-Jones S."/>
            <person name="Grocock R."/>
            <person name="Hammond S."/>
            <person name="Harrison E.S.I."/>
            <person name="Hart E."/>
            <person name="Haugen E."/>
            <person name="Heath P.D."/>
            <person name="Holmes S."/>
            <person name="Holt K."/>
            <person name="Howden P.J."/>
            <person name="Hunt A.R."/>
            <person name="Hunt S.E."/>
            <person name="Hunter G."/>
            <person name="Isherwood J."/>
            <person name="James R."/>
            <person name="Johnson C."/>
            <person name="Johnson D."/>
            <person name="Joy A."/>
            <person name="Kay M."/>
            <person name="Kershaw J.K."/>
            <person name="Kibukawa M."/>
            <person name="Kimberley A.M."/>
            <person name="King A."/>
            <person name="Knights A.J."/>
            <person name="Lad H."/>
            <person name="Laird G."/>
            <person name="Lawlor S."/>
            <person name="Leongamornlert D.A."/>
            <person name="Lloyd D.M."/>
            <person name="Loveland J."/>
            <person name="Lovell J."/>
            <person name="Lush M.J."/>
            <person name="Lyne R."/>
            <person name="Martin S."/>
            <person name="Mashreghi-Mohammadi M."/>
            <person name="Matthews L."/>
            <person name="Matthews N.S.W."/>
            <person name="McLaren S."/>
            <person name="Milne S."/>
            <person name="Mistry S."/>
            <person name="Moore M.J.F."/>
            <person name="Nickerson T."/>
            <person name="O'Dell C.N."/>
            <person name="Oliver K."/>
            <person name="Palmeiri A."/>
            <person name="Palmer S.A."/>
            <person name="Parker A."/>
            <person name="Patel D."/>
            <person name="Pearce A.V."/>
            <person name="Peck A.I."/>
            <person name="Pelan S."/>
            <person name="Phelps K."/>
            <person name="Phillimore B.J."/>
            <person name="Plumb R."/>
            <person name="Rajan J."/>
            <person name="Raymond C."/>
            <person name="Rouse G."/>
            <person name="Saenphimmachak C."/>
            <person name="Sehra H.K."/>
            <person name="Sheridan E."/>
            <person name="Shownkeen R."/>
            <person name="Sims S."/>
            <person name="Skuce C.D."/>
            <person name="Smith M."/>
            <person name="Steward C."/>
            <person name="Subramanian S."/>
            <person name="Sycamore N."/>
            <person name="Tracey A."/>
            <person name="Tromans A."/>
            <person name="Van Helmond Z."/>
            <person name="Wall M."/>
            <person name="Wallis J.M."/>
            <person name="White S."/>
            <person name="Whitehead S.L."/>
            <person name="Wilkinson J.E."/>
            <person name="Willey D.L."/>
            <person name="Williams H."/>
            <person name="Wilming L."/>
            <person name="Wray P.W."/>
            <person name="Wu Z."/>
            <person name="Coulson A."/>
            <person name="Vaudin M."/>
            <person name="Sulston J.E."/>
            <person name="Durbin R.M."/>
            <person name="Hubbard T."/>
            <person name="Wooster R."/>
            <person name="Dunham I."/>
            <person name="Carter N.P."/>
            <person name="McVean G."/>
            <person name="Ross M.T."/>
            <person name="Harrow J."/>
            <person name="Olson M.V."/>
            <person name="Beck S."/>
            <person name="Rogers J."/>
            <person name="Bentley D.R."/>
        </authorList>
    </citation>
    <scope>NUCLEOTIDE SEQUENCE [LARGE SCALE GENOMIC DNA]</scope>
</reference>
<reference key="3">
    <citation type="journal article" date="2004" name="Genome Res.">
        <title>The status, quality, and expansion of the NIH full-length cDNA project: the Mammalian Gene Collection (MGC).</title>
        <authorList>
            <consortium name="The MGC Project Team"/>
        </authorList>
    </citation>
    <scope>NUCLEOTIDE SEQUENCE [LARGE SCALE MRNA]</scope>
</reference>
<reference key="4">
    <citation type="journal article" date="2001" name="Cell">
        <title>Signal transduction in neuronal migration: roles of GTPase activating proteins and the small GTPase Cdc42 in the Slit-Robo pathway.</title>
        <authorList>
            <person name="Wong K."/>
            <person name="Ren X.R."/>
            <person name="Huang Y.Z."/>
            <person name="Xie Y."/>
            <person name="Liu G."/>
            <person name="Saito H."/>
            <person name="Tang H."/>
            <person name="Wen L."/>
            <person name="Brady-Kalnay S.M."/>
            <person name="Mei L."/>
            <person name="Wu J.Y."/>
            <person name="Xiong W.C."/>
            <person name="Rao Y."/>
        </authorList>
    </citation>
    <scope>INTERACTION WITH ROBO1</scope>
</reference>
<reference key="5">
    <citation type="journal article" date="2006" name="Cell">
        <title>Global, in vivo, and site-specific phosphorylation dynamics in signaling networks.</title>
        <authorList>
            <person name="Olsen J.V."/>
            <person name="Blagoev B."/>
            <person name="Gnad F."/>
            <person name="Macek B."/>
            <person name="Kumar C."/>
            <person name="Mortensen P."/>
            <person name="Mann M."/>
        </authorList>
    </citation>
    <scope>IDENTIFICATION BY MASS SPECTROMETRY [LARGE SCALE ANALYSIS]</scope>
    <source>
        <tissue>Cervix carcinoma</tissue>
    </source>
</reference>
<reference key="6">
    <citation type="journal article" date="2008" name="Proc. Natl. Acad. Sci. U.S.A.">
        <title>A quantitative atlas of mitotic phosphorylation.</title>
        <authorList>
            <person name="Dephoure N."/>
            <person name="Zhou C."/>
            <person name="Villen J."/>
            <person name="Beausoleil S.A."/>
            <person name="Bakalarski C.E."/>
            <person name="Elledge S.J."/>
            <person name="Gygi S.P."/>
        </authorList>
    </citation>
    <scope>IDENTIFICATION BY MASS SPECTROMETRY [LARGE SCALE ANALYSIS]</scope>
    <source>
        <tissue>Cervix carcinoma</tissue>
    </source>
</reference>
<reference key="7">
    <citation type="journal article" date="2009" name="Anal. Chem.">
        <title>Lys-N and trypsin cover complementary parts of the phosphoproteome in a refined SCX-based approach.</title>
        <authorList>
            <person name="Gauci S."/>
            <person name="Helbig A.O."/>
            <person name="Slijper M."/>
            <person name="Krijgsveld J."/>
            <person name="Heck A.J."/>
            <person name="Mohammed S."/>
        </authorList>
    </citation>
    <scope>IDENTIFICATION BY MASS SPECTROMETRY [LARGE SCALE ANALYSIS]</scope>
</reference>
<reference key="8">
    <citation type="journal article" date="2009" name="BMC Immunol.">
        <title>Identification of SH3 domain interaction partners of human FasL (CD178) by phage display screening.</title>
        <authorList>
            <person name="Voss M."/>
            <person name="Lettau M."/>
            <person name="Janssen O."/>
        </authorList>
    </citation>
    <scope>INTERACTION WITH FASLG</scope>
</reference>
<reference key="9">
    <citation type="journal article" date="2010" name="J. Biol. Chem.">
        <title>srGAP2 arginine methylation regulates cell migration and cell spreading through promoting dimerization.</title>
        <authorList>
            <person name="Guo S."/>
            <person name="Bao S."/>
        </authorList>
    </citation>
    <scope>FUNCTION IN CELL MIGRATION</scope>
    <scope>SUBCELLULAR LOCATION</scope>
    <scope>INTERACTION WITH PRMT5</scope>
    <scope>METHYLATION AT ARG-927 BY PRMT5</scope>
    <scope>MUTAGENESIS OF ARG-927</scope>
</reference>
<reference key="10">
    <citation type="journal article" date="2010" name="Sci. Signal.">
        <title>Quantitative phosphoproteomics reveals widespread full phosphorylation site occupancy during mitosis.</title>
        <authorList>
            <person name="Olsen J.V."/>
            <person name="Vermeulen M."/>
            <person name="Santamaria A."/>
            <person name="Kumar C."/>
            <person name="Miller M.L."/>
            <person name="Jensen L.J."/>
            <person name="Gnad F."/>
            <person name="Cox J."/>
            <person name="Jensen T.S."/>
            <person name="Nigg E.A."/>
            <person name="Brunak S."/>
            <person name="Mann M."/>
        </authorList>
    </citation>
    <scope>PHOSPHORYLATION [LARGE SCALE ANALYSIS] AT SER-930</scope>
    <scope>IDENTIFICATION BY MASS SPECTROMETRY [LARGE SCALE ANALYSIS]</scope>
    <source>
        <tissue>Cervix carcinoma</tissue>
    </source>
</reference>
<reference key="11">
    <citation type="journal article" date="2011" name="BMC Syst. Biol.">
        <title>Initial characterization of the human central proteome.</title>
        <authorList>
            <person name="Burkard T.R."/>
            <person name="Planyavsky M."/>
            <person name="Kaupe I."/>
            <person name="Breitwieser F.P."/>
            <person name="Buerckstuemmer T."/>
            <person name="Bennett K.L."/>
            <person name="Superti-Furga G."/>
            <person name="Colinge J."/>
        </authorList>
    </citation>
    <scope>IDENTIFICATION BY MASS SPECTROMETRY [LARGE SCALE ANALYSIS]</scope>
</reference>
<reference key="12">
    <citation type="journal article" date="2011" name="Sci. Signal.">
        <title>System-wide temporal characterization of the proteome and phosphoproteome of human embryonic stem cell differentiation.</title>
        <authorList>
            <person name="Rigbolt K.T."/>
            <person name="Prokhorova T.A."/>
            <person name="Akimov V."/>
            <person name="Henningsen J."/>
            <person name="Johansen P.T."/>
            <person name="Kratchmarova I."/>
            <person name="Kassem M."/>
            <person name="Mann M."/>
            <person name="Olsen J.V."/>
            <person name="Blagoev B."/>
        </authorList>
    </citation>
    <scope>IDENTIFICATION BY MASS SPECTROMETRY [LARGE SCALE ANALYSIS]</scope>
</reference>
<reference key="13">
    <citation type="journal article" date="2012" name="Am. J. Med. Genet. A">
        <title>Early infantile epileptic encephalopathy associated with the disrupted gene encoding Slit-Robo Rho GTPase activating protein 2 (SRGAP2).</title>
        <authorList>
            <person name="Saitsu H."/>
            <person name="Osaka H."/>
            <person name="Sugiyama S."/>
            <person name="Kurosawa K."/>
            <person name="Mizuguchi T."/>
            <person name="Nishiyama K."/>
            <person name="Nishimura A."/>
            <person name="Tsurusaki Y."/>
            <person name="Doi H."/>
            <person name="Miyake N."/>
            <person name="Harada N."/>
            <person name="Kato M."/>
            <person name="Matsumoto N."/>
        </authorList>
    </citation>
    <scope>CHROMOSOMAL REARRANGEMENT</scope>
</reference>
<reference key="14">
    <citation type="journal article" date="2011" name="J. Biol. Chem.">
        <title>Bi-modal regulation of a formin by srGAP2.</title>
        <authorList>
            <person name="Mason F.M."/>
            <person name="Heimsath E.G."/>
            <person name="Higgs H.N."/>
            <person name="Soderling S.H."/>
        </authorList>
    </citation>
    <scope>FUNCTION IN ACTIN FILAMENT SEVERING</scope>
    <scope>RAC1 GAP ACTIVITY</scope>
    <scope>INTERACTION WITH FMNL1; FMNL3 AND ROBO2</scope>
    <scope>SUBCELLULAR LOCATION</scope>
</reference>
<reference key="15">
    <citation type="journal article" date="2012" name="Cell">
        <title>Inhibition of SRGAP2 function by its human-specific paralogs induces neoteny during spine maturation.</title>
        <authorList>
            <person name="Charrier C."/>
            <person name="Joshi K."/>
            <person name="Coutinho-Budd J."/>
            <person name="Kim J.E."/>
            <person name="Lambert N."/>
            <person name="de Marchena J."/>
            <person name="Jin W.L."/>
            <person name="Vanderhaeghen P."/>
            <person name="Ghosh A."/>
            <person name="Sassa T."/>
            <person name="Polleux F."/>
        </authorList>
    </citation>
    <scope>FUNCTION</scope>
    <scope>ACTIVITY REGULATION</scope>
    <scope>SUBCELLULAR LOCATION</scope>
    <scope>INTERACTION WITH SRGAP2C</scope>
</reference>
<reference key="16">
    <citation type="journal article" date="2012" name="J. Cell Sci.">
        <title>The F-BAR domains from srGAP1, srGAP2, and srGAP3 differentially regulate membrane deformation.</title>
        <authorList>
            <person name="Coutinho-Budd J."/>
            <person name="Ghukasyan V."/>
            <person name="Zylka M.J."/>
            <person name="Polleux F."/>
        </authorList>
    </citation>
    <scope>HETEROOLIGOMERIZATION</scope>
    <scope>DOMAIN F-BAR</scope>
</reference>
<reference key="17">
    <citation type="journal article" date="2013" name="J. Proteome Res.">
        <title>Toward a comprehensive characterization of a human cancer cell phosphoproteome.</title>
        <authorList>
            <person name="Zhou H."/>
            <person name="Di Palma S."/>
            <person name="Preisinger C."/>
            <person name="Peng M."/>
            <person name="Polat A.N."/>
            <person name="Heck A.J."/>
            <person name="Mohammed S."/>
        </authorList>
    </citation>
    <scope>PHOSPHORYLATION [LARGE SCALE ANALYSIS] AT SER-795; SER-916; SER-994; SER-1013 AND SER-1027</scope>
    <scope>IDENTIFICATION BY MASS SPECTROMETRY [LARGE SCALE ANALYSIS]</scope>
    <source>
        <tissue>Cervix carcinoma</tissue>
        <tissue>Erythroleukemia</tissue>
    </source>
</reference>
<reference key="18">
    <citation type="journal article" date="2014" name="J. Proteomics">
        <title>An enzyme assisted RP-RPLC approach for in-depth analysis of human liver phosphoproteome.</title>
        <authorList>
            <person name="Bian Y."/>
            <person name="Song C."/>
            <person name="Cheng K."/>
            <person name="Dong M."/>
            <person name="Wang F."/>
            <person name="Huang J."/>
            <person name="Sun D."/>
            <person name="Wang L."/>
            <person name="Ye M."/>
            <person name="Zou H."/>
        </authorList>
    </citation>
    <scope>PHOSPHORYLATION [LARGE SCALE ANALYSIS] AT SER-724</scope>
    <scope>IDENTIFICATION BY MASS SPECTROMETRY [LARGE SCALE ANALYSIS]</scope>
    <source>
        <tissue>Liver</tissue>
    </source>
</reference>
<reference key="19">
    <citation type="journal article" date="2016" name="Neuron">
        <title>SRGAP2 and its human-specific paralog co-regulate the development of excitatory and inhibitory synapses.</title>
        <authorList>
            <person name="Fossati M."/>
            <person name="Pizzarelli R."/>
            <person name="Schmidt E.R."/>
            <person name="Kupferman J.V."/>
            <person name="Stroebel D."/>
            <person name="Polleux F."/>
            <person name="Charrier C."/>
        </authorList>
    </citation>
    <scope>FUNCTION</scope>
    <scope>ACTIVITY REGULATION</scope>
    <scope>MUTAGENESIS OF ARG-527 AND LYS-566</scope>
</reference>
<reference key="20">
    <citation type="submission" date="2006-10" db="PDB data bank">
        <title>Solution structure of the SH3 domain of human SLIT-ROBO Rho GTPase-activating protein 2.</title>
        <authorList>
            <consortium name="RIKEN structural genomics initiative (RSGI)"/>
        </authorList>
    </citation>
    <scope>STRUCTURE BY NMR OF 729-787</scope>
</reference>
<reference key="21">
    <citation type="journal article" date="2014" name="Acta Crystallogr. F">
        <title>Purification, crystallization and preliminary X-ray analysis of the inverse F-BAR domain of the human srGAP2 protein.</title>
        <authorList>
            <person name="Wang H."/>
            <person name="Zhang Y."/>
            <person name="Zhang Z."/>
            <person name="Jin W.L."/>
            <person name="Wu G."/>
        </authorList>
    </citation>
    <scope>CRYSTALLIZATION</scope>
</reference>
<reference key="22">
    <citation type="journal article" date="2016" name="Acta Crystallogr. D">
        <title>Molecular symmetry-constrained systematic search approach to structure solution of the coiled-coil SRGAP2 F-BARx domain.</title>
        <authorList>
            <person name="Sporny M."/>
            <person name="Guez-Haddad J."/>
            <person name="Waterman D.G."/>
            <person name="Isupov M.N."/>
            <person name="Opatowsky Y."/>
        </authorList>
    </citation>
    <scope>CRYSTALLIZATION</scope>
</reference>
<reference evidence="23 24" key="23">
    <citation type="journal article" date="2015" name="Structure">
        <title>The neuronal migration factor srGAP2 achieves specificity in ligand binding through a two-component molecular mechanism.</title>
        <authorList>
            <person name="Guez-Haddad J."/>
            <person name="Sporny M."/>
            <person name="Sasson Y."/>
            <person name="Gevorkyan-Airapetov L."/>
            <person name="Lahav-Mankovski N."/>
            <person name="Margulies D."/>
            <person name="Radzimanowski J."/>
            <person name="Opatowsky Y."/>
        </authorList>
    </citation>
    <scope>X-RAY CRYSTALLOGRAPHY (1.73 ANGSTROMS) OF 729-815</scope>
    <scope>SUBUNIT</scope>
    <scope>INTERACTION WITH ROBO1</scope>
    <scope>MUTAGENESIS OF TRP-765; TYR-781 AND PRO-807</scope>
</reference>
<reference evidence="25" key="24">
    <citation type="journal article" date="2017" name="Mol. Biol. Evol.">
        <title>Structural history of human SRGAP2 proteins.</title>
        <authorList>
            <person name="Sporny M."/>
            <person name="Guez-Haddad J."/>
            <person name="Kreusch A."/>
            <person name="Shakartzi S."/>
            <person name="Neznansky A."/>
            <person name="Cross A."/>
            <person name="Isupov M.N."/>
            <person name="Qualmann B."/>
            <person name="Kessels M.M."/>
            <person name="Opatowsky Y."/>
        </authorList>
    </citation>
    <scope>X-RAY CRYSTALLOGRAPHY (2.70 ANGSTROMS) OF 1-484</scope>
    <scope>FUNCTION</scope>
    <scope>ACTIVITY REGULATION</scope>
    <scope>SUBUNIT</scope>
    <scope>INTERACTION WITH SRGAP2C</scope>
    <scope>MUTAGENESIS OF 54-ARG-LYS-55; ARG-108 AND 234-LYS--LYS-238</scope>
</reference>
<keyword id="KW-0002">3D-structure</keyword>
<keyword id="KW-1003">Cell membrane</keyword>
<keyword id="KW-0966">Cell projection</keyword>
<keyword id="KW-0160">Chromosomal rearrangement</keyword>
<keyword id="KW-0175">Coiled coil</keyword>
<keyword id="KW-0963">Cytoplasm</keyword>
<keyword id="KW-0968">Cytoplasmic vesicle</keyword>
<keyword id="KW-0343">GTPase activation</keyword>
<keyword id="KW-0472">Membrane</keyword>
<keyword id="KW-0488">Methylation</keyword>
<keyword id="KW-0524">Neurogenesis</keyword>
<keyword id="KW-0539">Nucleus</keyword>
<keyword id="KW-0597">Phosphoprotein</keyword>
<keyword id="KW-0628">Postsynaptic cell membrane</keyword>
<keyword id="KW-1267">Proteomics identification</keyword>
<keyword id="KW-1185">Reference proteome</keyword>
<keyword id="KW-0728">SH3 domain</keyword>
<keyword id="KW-0770">Synapse</keyword>
<organism>
    <name type="scientific">Homo sapiens</name>
    <name type="common">Human</name>
    <dbReference type="NCBI Taxonomy" id="9606"/>
    <lineage>
        <taxon>Eukaryota</taxon>
        <taxon>Metazoa</taxon>
        <taxon>Chordata</taxon>
        <taxon>Craniata</taxon>
        <taxon>Vertebrata</taxon>
        <taxon>Euteleostomi</taxon>
        <taxon>Mammalia</taxon>
        <taxon>Eutheria</taxon>
        <taxon>Euarchontoglires</taxon>
        <taxon>Primates</taxon>
        <taxon>Haplorrhini</taxon>
        <taxon>Catarrhini</taxon>
        <taxon>Hominidae</taxon>
        <taxon>Homo</taxon>
    </lineage>
</organism>
<evidence type="ECO:0000250" key="1">
    <source>
        <dbReference type="UniProtKB" id="D4A208"/>
    </source>
</evidence>
<evidence type="ECO:0000250" key="2">
    <source>
        <dbReference type="UniProtKB" id="Q91Z67"/>
    </source>
</evidence>
<evidence type="ECO:0000255" key="3"/>
<evidence type="ECO:0000255" key="4">
    <source>
        <dbReference type="PROSITE-ProRule" id="PRU00172"/>
    </source>
</evidence>
<evidence type="ECO:0000255" key="5">
    <source>
        <dbReference type="PROSITE-ProRule" id="PRU00192"/>
    </source>
</evidence>
<evidence type="ECO:0000255" key="6">
    <source>
        <dbReference type="PROSITE-ProRule" id="PRU01077"/>
    </source>
</evidence>
<evidence type="ECO:0000256" key="7">
    <source>
        <dbReference type="SAM" id="MobiDB-lite"/>
    </source>
</evidence>
<evidence type="ECO:0000269" key="8">
    <source>
    </source>
</evidence>
<evidence type="ECO:0000269" key="9">
    <source>
    </source>
</evidence>
<evidence type="ECO:0000269" key="10">
    <source>
    </source>
</evidence>
<evidence type="ECO:0000269" key="11">
    <source>
    </source>
</evidence>
<evidence type="ECO:0000269" key="12">
    <source>
    </source>
</evidence>
<evidence type="ECO:0000269" key="13">
    <source>
    </source>
</evidence>
<evidence type="ECO:0000269" key="14">
    <source>
    </source>
</evidence>
<evidence type="ECO:0000269" key="15">
    <source>
    </source>
</evidence>
<evidence type="ECO:0000269" key="16">
    <source>
    </source>
</evidence>
<evidence type="ECO:0000269" key="17">
    <source>
    </source>
</evidence>
<evidence type="ECO:0000303" key="18">
    <source>
    </source>
</evidence>
<evidence type="ECO:0000303" key="19">
    <source>
    </source>
</evidence>
<evidence type="ECO:0000303" key="20">
    <source>
    </source>
</evidence>
<evidence type="ECO:0000305" key="21"/>
<evidence type="ECO:0000312" key="22">
    <source>
        <dbReference type="HGNC" id="HGNC:19751"/>
    </source>
</evidence>
<evidence type="ECO:0007744" key="23">
    <source>
        <dbReference type="PDB" id="4RTT"/>
    </source>
</evidence>
<evidence type="ECO:0007744" key="24">
    <source>
        <dbReference type="PDB" id="4RUG"/>
    </source>
</evidence>
<evidence type="ECO:0007744" key="25">
    <source>
        <dbReference type="PDB" id="5I6J"/>
    </source>
</evidence>
<evidence type="ECO:0007744" key="26">
    <source>
    </source>
</evidence>
<evidence type="ECO:0007744" key="27">
    <source>
    </source>
</evidence>
<evidence type="ECO:0007744" key="28">
    <source>
    </source>
</evidence>
<evidence type="ECO:0007829" key="29">
    <source>
        <dbReference type="PDB" id="2DL8"/>
    </source>
</evidence>
<evidence type="ECO:0007829" key="30">
    <source>
        <dbReference type="PDB" id="4RUG"/>
    </source>
</evidence>
<evidence type="ECO:0007829" key="31">
    <source>
        <dbReference type="PDB" id="5I6J"/>
    </source>
</evidence>
<evidence type="ECO:0007829" key="32">
    <source>
        <dbReference type="PDB" id="5I6R"/>
    </source>
</evidence>
<dbReference type="EMBL" id="AC244023">
    <property type="status" value="NOT_ANNOTATED_CDS"/>
    <property type="molecule type" value="Genomic_DNA"/>
</dbReference>
<dbReference type="EMBL" id="AC244034">
    <property type="status" value="NOT_ANNOTATED_CDS"/>
    <property type="molecule type" value="Genomic_DNA"/>
</dbReference>
<dbReference type="EMBL" id="AC244035">
    <property type="status" value="NOT_ANNOTATED_CDS"/>
    <property type="molecule type" value="Genomic_DNA"/>
</dbReference>
<dbReference type="EMBL" id="AC244158">
    <property type="status" value="NOT_ANNOTATED_CDS"/>
    <property type="molecule type" value="Genomic_DNA"/>
</dbReference>
<dbReference type="EMBL" id="AB007925">
    <property type="protein sequence ID" value="BAA32301.1"/>
    <property type="status" value="ALT_INIT"/>
    <property type="molecule type" value="mRNA"/>
</dbReference>
<dbReference type="EMBL" id="BC132872">
    <property type="protein sequence ID" value="AAI32873.1"/>
    <property type="molecule type" value="mRNA"/>
</dbReference>
<dbReference type="EMBL" id="BC132874">
    <property type="protein sequence ID" value="AAI32875.1"/>
    <property type="molecule type" value="mRNA"/>
</dbReference>
<dbReference type="CCDS" id="CCDS73017.1"/>
<dbReference type="PIR" id="C59437">
    <property type="entry name" value="C59437"/>
</dbReference>
<dbReference type="RefSeq" id="NP_001164108.1">
    <property type="nucleotide sequence ID" value="NM_001170637.3"/>
</dbReference>
<dbReference type="RefSeq" id="NP_056141.2">
    <property type="nucleotide sequence ID" value="NM_015326.5"/>
</dbReference>
<dbReference type="RefSeq" id="XP_005277567.1">
    <property type="nucleotide sequence ID" value="XM_005277510.2"/>
</dbReference>
<dbReference type="PDB" id="2DL8">
    <property type="method" value="NMR"/>
    <property type="chains" value="A=729-787"/>
</dbReference>
<dbReference type="PDB" id="4RTT">
    <property type="method" value="X-ray"/>
    <property type="resolution" value="1.87 A"/>
    <property type="chains" value="A/B=729-815"/>
</dbReference>
<dbReference type="PDB" id="4RUG">
    <property type="method" value="X-ray"/>
    <property type="resolution" value="1.73 A"/>
    <property type="chains" value="A/B=729-815"/>
</dbReference>
<dbReference type="PDB" id="5I6J">
    <property type="method" value="X-ray"/>
    <property type="resolution" value="2.70 A"/>
    <property type="chains" value="A=1-484"/>
</dbReference>
<dbReference type="PDB" id="5I6R">
    <property type="method" value="X-ray"/>
    <property type="resolution" value="2.15 A"/>
    <property type="chains" value="A=1-484"/>
</dbReference>
<dbReference type="PDB" id="5I7D">
    <property type="method" value="X-ray"/>
    <property type="resolution" value="3.95 A"/>
    <property type="chains" value="A/B=1-484"/>
</dbReference>
<dbReference type="PDBsum" id="2DL8"/>
<dbReference type="PDBsum" id="4RTT"/>
<dbReference type="PDBsum" id="4RUG"/>
<dbReference type="PDBsum" id="5I6J"/>
<dbReference type="PDBsum" id="5I6R"/>
<dbReference type="PDBsum" id="5I7D"/>
<dbReference type="SMR" id="O75044"/>
<dbReference type="BioGRID" id="116956">
    <property type="interactions" value="163"/>
</dbReference>
<dbReference type="DIP" id="DIP-37618N"/>
<dbReference type="FunCoup" id="O75044">
    <property type="interactions" value="1095"/>
</dbReference>
<dbReference type="IntAct" id="O75044">
    <property type="interactions" value="58"/>
</dbReference>
<dbReference type="MINT" id="O75044"/>
<dbReference type="STRING" id="9606.ENSP00000459615"/>
<dbReference type="GlyGen" id="O75044">
    <property type="glycosylation" value="6 sites, 1 O-linked glycan (5 sites)"/>
</dbReference>
<dbReference type="iPTMnet" id="O75044"/>
<dbReference type="PhosphoSitePlus" id="O75044"/>
<dbReference type="BioMuta" id="SRGAP2"/>
<dbReference type="jPOST" id="O75044"/>
<dbReference type="MassIVE" id="O75044"/>
<dbReference type="PaxDb" id="9606-ENSP00000459615"/>
<dbReference type="PeptideAtlas" id="O75044"/>
<dbReference type="ProteomicsDB" id="49722"/>
<dbReference type="Pumba" id="O75044"/>
<dbReference type="Antibodypedia" id="74470">
    <property type="antibodies" value="93 antibodies from 27 providers"/>
</dbReference>
<dbReference type="DNASU" id="23380"/>
<dbReference type="Ensembl" id="ENST00000573034.8">
    <property type="protein sequence ID" value="ENSP00000459615.2"/>
    <property type="gene ID" value="ENSG00000266028.8"/>
</dbReference>
<dbReference type="GeneID" id="23380"/>
<dbReference type="KEGG" id="hsa:23380"/>
<dbReference type="MANE-Select" id="ENST00000573034.8">
    <property type="protein sequence ID" value="ENSP00000459615.2"/>
    <property type="RefSeq nucleotide sequence ID" value="NM_015326.5"/>
    <property type="RefSeq protein sequence ID" value="NP_056141.2"/>
</dbReference>
<dbReference type="UCSC" id="uc031vli.2">
    <property type="organism name" value="human"/>
</dbReference>
<dbReference type="AGR" id="HGNC:19751"/>
<dbReference type="CTD" id="23380"/>
<dbReference type="DisGeNET" id="23380"/>
<dbReference type="GeneCards" id="SRGAP2"/>
<dbReference type="HGNC" id="HGNC:19751">
    <property type="gene designation" value="SRGAP2"/>
</dbReference>
<dbReference type="HPA" id="ENSG00000266028">
    <property type="expression patterns" value="Tissue enhanced (brain)"/>
</dbReference>
<dbReference type="MalaCards" id="SRGAP2"/>
<dbReference type="MIM" id="606524">
    <property type="type" value="gene"/>
</dbReference>
<dbReference type="neXtProt" id="NX_O75044"/>
<dbReference type="OpenTargets" id="ENSG00000266028"/>
<dbReference type="PharmGKB" id="PA164742513"/>
<dbReference type="VEuPathDB" id="HostDB:ENSG00000266028"/>
<dbReference type="eggNOG" id="KOG3565">
    <property type="taxonomic scope" value="Eukaryota"/>
</dbReference>
<dbReference type="GeneTree" id="ENSGT00950000182824"/>
<dbReference type="InParanoid" id="O75044"/>
<dbReference type="OMA" id="SPLNCWN"/>
<dbReference type="OrthoDB" id="9519756at2759"/>
<dbReference type="PAN-GO" id="O75044">
    <property type="GO annotations" value="2 GO annotations based on evolutionary models"/>
</dbReference>
<dbReference type="PhylomeDB" id="O75044"/>
<dbReference type="PathwayCommons" id="O75044"/>
<dbReference type="Reactome" id="R-HSA-428543">
    <property type="pathway name" value="Inactivation of CDC42 and RAC1"/>
</dbReference>
<dbReference type="Reactome" id="R-HSA-5663220">
    <property type="pathway name" value="RHO GTPases Activate Formins"/>
</dbReference>
<dbReference type="Reactome" id="R-HSA-9013148">
    <property type="pathway name" value="CDC42 GTPase cycle"/>
</dbReference>
<dbReference type="Reactome" id="R-HSA-9013149">
    <property type="pathway name" value="RAC1 GTPase cycle"/>
</dbReference>
<dbReference type="Reactome" id="R-HSA-9013406">
    <property type="pathway name" value="RHOQ GTPase cycle"/>
</dbReference>
<dbReference type="Reactome" id="R-HSA-9013420">
    <property type="pathway name" value="RHOU GTPase cycle"/>
</dbReference>
<dbReference type="Reactome" id="R-HSA-9013423">
    <property type="pathway name" value="RAC3 GTPase cycle"/>
</dbReference>
<dbReference type="Reactome" id="R-HSA-9035034">
    <property type="pathway name" value="RHOF GTPase cycle"/>
</dbReference>
<dbReference type="SignaLink" id="O75044"/>
<dbReference type="SIGNOR" id="O75044"/>
<dbReference type="BioGRID-ORCS" id="23380">
    <property type="hits" value="14 hits in 287 CRISPR screens"/>
</dbReference>
<dbReference type="ChiTaRS" id="SRGAP2">
    <property type="organism name" value="human"/>
</dbReference>
<dbReference type="EvolutionaryTrace" id="O75044"/>
<dbReference type="GeneWiki" id="SRGAP2"/>
<dbReference type="GenomeRNAi" id="23380"/>
<dbReference type="Pharos" id="O75044">
    <property type="development level" value="Tbio"/>
</dbReference>
<dbReference type="PRO" id="PR:O75044"/>
<dbReference type="Proteomes" id="UP000005640">
    <property type="component" value="Chromosome 1"/>
</dbReference>
<dbReference type="RNAct" id="O75044">
    <property type="molecule type" value="protein"/>
</dbReference>
<dbReference type="Bgee" id="ENSG00000266028">
    <property type="expression patterns" value="Expressed in cerebellar hemisphere and 172 other cell types or tissues"/>
</dbReference>
<dbReference type="ExpressionAtlas" id="O75044">
    <property type="expression patterns" value="baseline and differential"/>
</dbReference>
<dbReference type="GO" id="GO:0005737">
    <property type="term" value="C:cytoplasm"/>
    <property type="evidence" value="ECO:0000318"/>
    <property type="project" value="GO_Central"/>
</dbReference>
<dbReference type="GO" id="GO:0005829">
    <property type="term" value="C:cytosol"/>
    <property type="evidence" value="ECO:0000250"/>
    <property type="project" value="UniProtKB"/>
</dbReference>
<dbReference type="GO" id="GO:0044327">
    <property type="term" value="C:dendritic spine head"/>
    <property type="evidence" value="ECO:0000314"/>
    <property type="project" value="UniProtKB"/>
</dbReference>
<dbReference type="GO" id="GO:0098978">
    <property type="term" value="C:glutamatergic synapse"/>
    <property type="evidence" value="ECO:0007669"/>
    <property type="project" value="Ensembl"/>
</dbReference>
<dbReference type="GO" id="GO:0030027">
    <property type="term" value="C:lamellipodium"/>
    <property type="evidence" value="ECO:0000314"/>
    <property type="project" value="UniProtKB"/>
</dbReference>
<dbReference type="GO" id="GO:0005634">
    <property type="term" value="C:nucleus"/>
    <property type="evidence" value="ECO:0007669"/>
    <property type="project" value="UniProtKB-SubCell"/>
</dbReference>
<dbReference type="GO" id="GO:0045335">
    <property type="term" value="C:phagocytic vesicle"/>
    <property type="evidence" value="ECO:0000250"/>
    <property type="project" value="UniProtKB"/>
</dbReference>
<dbReference type="GO" id="GO:0005886">
    <property type="term" value="C:plasma membrane"/>
    <property type="evidence" value="ECO:0000314"/>
    <property type="project" value="UniProtKB"/>
</dbReference>
<dbReference type="GO" id="GO:0014069">
    <property type="term" value="C:postsynaptic density"/>
    <property type="evidence" value="ECO:0000250"/>
    <property type="project" value="UniProtKB"/>
</dbReference>
<dbReference type="GO" id="GO:0045211">
    <property type="term" value="C:postsynaptic membrane"/>
    <property type="evidence" value="ECO:0000250"/>
    <property type="project" value="UniProtKB"/>
</dbReference>
<dbReference type="GO" id="GO:0005096">
    <property type="term" value="F:GTPase activator activity"/>
    <property type="evidence" value="ECO:0000314"/>
    <property type="project" value="UniProtKB"/>
</dbReference>
<dbReference type="GO" id="GO:0042802">
    <property type="term" value="F:identical protein binding"/>
    <property type="evidence" value="ECO:0000353"/>
    <property type="project" value="IntAct"/>
</dbReference>
<dbReference type="GO" id="GO:0042803">
    <property type="term" value="F:protein homodimerization activity"/>
    <property type="evidence" value="ECO:0000314"/>
    <property type="project" value="UniProtKB"/>
</dbReference>
<dbReference type="GO" id="GO:0031267">
    <property type="term" value="F:small GTPase binding"/>
    <property type="evidence" value="ECO:0000314"/>
    <property type="project" value="UniProtKB"/>
</dbReference>
<dbReference type="GO" id="GO:0051014">
    <property type="term" value="P:actin filament severing"/>
    <property type="evidence" value="ECO:0000314"/>
    <property type="project" value="UniProtKB"/>
</dbReference>
<dbReference type="GO" id="GO:0060996">
    <property type="term" value="P:dendritic spine development"/>
    <property type="evidence" value="ECO:0000314"/>
    <property type="project" value="UniProtKB"/>
</dbReference>
<dbReference type="GO" id="GO:1904861">
    <property type="term" value="P:excitatory synapse assembly"/>
    <property type="evidence" value="ECO:0000314"/>
    <property type="project" value="UniProtKB"/>
</dbReference>
<dbReference type="GO" id="GO:0021816">
    <property type="term" value="P:extension of a leading process involved in cell motility in cerebral cortex radial glia guided migration"/>
    <property type="evidence" value="ECO:0000250"/>
    <property type="project" value="UniProtKB"/>
</dbReference>
<dbReference type="GO" id="GO:0046847">
    <property type="term" value="P:filopodium assembly"/>
    <property type="evidence" value="ECO:0000314"/>
    <property type="project" value="UniProtKB"/>
</dbReference>
<dbReference type="GO" id="GO:1904862">
    <property type="term" value="P:inhibitory synapse assembly"/>
    <property type="evidence" value="ECO:0000314"/>
    <property type="project" value="UniProtKB"/>
</dbReference>
<dbReference type="GO" id="GO:0003363">
    <property type="term" value="P:lamellipodium assembly involved in ameboidal cell migration"/>
    <property type="evidence" value="ECO:0000315"/>
    <property type="project" value="UniProtKB"/>
</dbReference>
<dbReference type="GO" id="GO:0030336">
    <property type="term" value="P:negative regulation of cell migration"/>
    <property type="evidence" value="ECO:0000318"/>
    <property type="project" value="GO_Central"/>
</dbReference>
<dbReference type="GO" id="GO:2001223">
    <property type="term" value="P:negative regulation of neuron migration"/>
    <property type="evidence" value="ECO:0000314"/>
    <property type="project" value="UniProtKB"/>
</dbReference>
<dbReference type="GO" id="GO:0048812">
    <property type="term" value="P:neuron projection morphogenesis"/>
    <property type="evidence" value="ECO:0000250"/>
    <property type="project" value="UniProtKB"/>
</dbReference>
<dbReference type="GO" id="GO:0043547">
    <property type="term" value="P:positive regulation of GTPase activity"/>
    <property type="evidence" value="ECO:0000314"/>
    <property type="project" value="UniProtKB"/>
</dbReference>
<dbReference type="GO" id="GO:0051056">
    <property type="term" value="P:regulation of small GTPase mediated signal transduction"/>
    <property type="evidence" value="ECO:0000304"/>
    <property type="project" value="Reactome"/>
</dbReference>
<dbReference type="GO" id="GO:0051963">
    <property type="term" value="P:regulation of synapse assembly"/>
    <property type="evidence" value="ECO:0007669"/>
    <property type="project" value="Ensembl"/>
</dbReference>
<dbReference type="GO" id="GO:0007165">
    <property type="term" value="P:signal transduction"/>
    <property type="evidence" value="ECO:0007669"/>
    <property type="project" value="InterPro"/>
</dbReference>
<dbReference type="GO" id="GO:0034446">
    <property type="term" value="P:substrate adhesion-dependent cell spreading"/>
    <property type="evidence" value="ECO:0000315"/>
    <property type="project" value="UniProtKB"/>
</dbReference>
<dbReference type="CDD" id="cd07682">
    <property type="entry name" value="F-BAR_srGAP2"/>
    <property type="match status" value="1"/>
</dbReference>
<dbReference type="CDD" id="cd04383">
    <property type="entry name" value="RhoGAP_srGAP"/>
    <property type="match status" value="1"/>
</dbReference>
<dbReference type="CDD" id="cd11955">
    <property type="entry name" value="SH3_srGAP1-3"/>
    <property type="match status" value="1"/>
</dbReference>
<dbReference type="FunFam" id="1.10.555.10:FF:000010">
    <property type="entry name" value="SLIT-ROBO Rho GTPase-activating protein 1 isoform 2"/>
    <property type="match status" value="1"/>
</dbReference>
<dbReference type="FunFam" id="1.20.1270.60:FF:000006">
    <property type="entry name" value="SLIT-ROBO Rho GTPase-activating protein 1 isoform 2"/>
    <property type="match status" value="1"/>
</dbReference>
<dbReference type="FunFam" id="2.30.30.40:FF:000266">
    <property type="entry name" value="SLIT-ROBO Rho GTPase-activating protein 2"/>
    <property type="match status" value="1"/>
</dbReference>
<dbReference type="Gene3D" id="1.20.1270.60">
    <property type="entry name" value="Arfaptin homology (AH) domain/BAR domain"/>
    <property type="match status" value="1"/>
</dbReference>
<dbReference type="Gene3D" id="1.10.555.10">
    <property type="entry name" value="Rho GTPase activation protein"/>
    <property type="match status" value="1"/>
</dbReference>
<dbReference type="Gene3D" id="2.30.30.40">
    <property type="entry name" value="SH3 Domains"/>
    <property type="match status" value="1"/>
</dbReference>
<dbReference type="InterPro" id="IPR027267">
    <property type="entry name" value="AH/BAR_dom_sf"/>
</dbReference>
<dbReference type="InterPro" id="IPR031160">
    <property type="entry name" value="F_BAR"/>
</dbReference>
<dbReference type="InterPro" id="IPR001060">
    <property type="entry name" value="FCH_dom"/>
</dbReference>
<dbReference type="InterPro" id="IPR008936">
    <property type="entry name" value="Rho_GTPase_activation_prot"/>
</dbReference>
<dbReference type="InterPro" id="IPR000198">
    <property type="entry name" value="RhoGAP_dom"/>
</dbReference>
<dbReference type="InterPro" id="IPR036028">
    <property type="entry name" value="SH3-like_dom_sf"/>
</dbReference>
<dbReference type="InterPro" id="IPR001452">
    <property type="entry name" value="SH3_domain"/>
</dbReference>
<dbReference type="InterPro" id="IPR051627">
    <property type="entry name" value="SLIT-ROBO_RhoGAP"/>
</dbReference>
<dbReference type="InterPro" id="IPR035648">
    <property type="entry name" value="srGAP1/2/3_SH3"/>
</dbReference>
<dbReference type="PANTHER" id="PTHR14166">
    <property type="entry name" value="SLIT-ROBO RHO GTPASE ACTIVATING PROTEIN"/>
    <property type="match status" value="1"/>
</dbReference>
<dbReference type="Pfam" id="PF00611">
    <property type="entry name" value="FCH"/>
    <property type="match status" value="1"/>
</dbReference>
<dbReference type="Pfam" id="PF00620">
    <property type="entry name" value="RhoGAP"/>
    <property type="match status" value="1"/>
</dbReference>
<dbReference type="Pfam" id="PF00018">
    <property type="entry name" value="SH3_1"/>
    <property type="match status" value="1"/>
</dbReference>
<dbReference type="SMART" id="SM00055">
    <property type="entry name" value="FCH"/>
    <property type="match status" value="1"/>
</dbReference>
<dbReference type="SMART" id="SM00324">
    <property type="entry name" value="RhoGAP"/>
    <property type="match status" value="1"/>
</dbReference>
<dbReference type="SMART" id="SM00326">
    <property type="entry name" value="SH3"/>
    <property type="match status" value="1"/>
</dbReference>
<dbReference type="SUPFAM" id="SSF103657">
    <property type="entry name" value="BAR/IMD domain-like"/>
    <property type="match status" value="1"/>
</dbReference>
<dbReference type="SUPFAM" id="SSF48350">
    <property type="entry name" value="GTPase activation domain, GAP"/>
    <property type="match status" value="1"/>
</dbReference>
<dbReference type="SUPFAM" id="SSF50044">
    <property type="entry name" value="SH3-domain"/>
    <property type="match status" value="1"/>
</dbReference>
<dbReference type="PROSITE" id="PS51741">
    <property type="entry name" value="F_BAR"/>
    <property type="match status" value="1"/>
</dbReference>
<dbReference type="PROSITE" id="PS50238">
    <property type="entry name" value="RHOGAP"/>
    <property type="match status" value="1"/>
</dbReference>
<dbReference type="PROSITE" id="PS50002">
    <property type="entry name" value="SH3"/>
    <property type="match status" value="1"/>
</dbReference>